<name>Y1133_NEIMB</name>
<protein>
    <recommendedName>
        <fullName>Putative ankyrin repeat protein NMB1133/NMB1171</fullName>
    </recommendedName>
</protein>
<proteinExistence type="predicted"/>
<sequence length="253" mass="29197">MMGDSVIYYVEQADEPVNRADERARKTFKYFWRELFWERRRIISALDFAMVKVPFFQDGEDGEICEHMWIDDIYFDGLYIYGVLNNEPGELTNVEQGESVCVPVDDISDWMFVCNGIPYGGFTIQAMRGQMTEEERTEHDAAWGIDFGDPGQILLVYEEKEHPENLEEHPMCRNCIDDFRQQLSQNSDYLREQDEDGYTPLHHEAIAGNALMVQAMLEYGANPASTTSEGYTALDFACLTGWQNVADLLEPRH</sequence>
<gene>
    <name type="ordered locus">NMB1133</name>
</gene>
<gene>
    <name type="ordered locus">NMB1171</name>
</gene>
<keyword id="KW-0040">ANK repeat</keyword>
<keyword id="KW-1185">Reference proteome</keyword>
<keyword id="KW-0677">Repeat</keyword>
<dbReference type="EMBL" id="AE002098">
    <property type="protein sequence ID" value="AAF41521.1"/>
    <property type="molecule type" value="Genomic_DNA"/>
</dbReference>
<dbReference type="EMBL" id="AE002098">
    <property type="protein sequence ID" value="AAF41556.1"/>
    <property type="molecule type" value="Genomic_DNA"/>
</dbReference>
<dbReference type="PIR" id="D81118">
    <property type="entry name" value="D81118"/>
</dbReference>
<dbReference type="RefSeq" id="NP_274162.1">
    <property type="nucleotide sequence ID" value="NC_003112.2"/>
</dbReference>
<dbReference type="RefSeq" id="NP_274198.1">
    <property type="nucleotide sequence ID" value="NC_003112.2"/>
</dbReference>
<dbReference type="RefSeq" id="WP_002244131.1">
    <property type="nucleotide sequence ID" value="NC_003112.2"/>
</dbReference>
<dbReference type="SMR" id="Q9JRZ6"/>
<dbReference type="STRING" id="122586.NMB1133"/>
<dbReference type="PaxDb" id="122586-NMB1133"/>
<dbReference type="KEGG" id="nme:NMB1133"/>
<dbReference type="KEGG" id="nme:NMB1171"/>
<dbReference type="PATRIC" id="fig|122586.8.peg.1436"/>
<dbReference type="HOGENOM" id="CLU_059928_0_0_4"/>
<dbReference type="InParanoid" id="Q9JRZ6"/>
<dbReference type="OrthoDB" id="6571369at2"/>
<dbReference type="Proteomes" id="UP000000425">
    <property type="component" value="Chromosome"/>
</dbReference>
<dbReference type="Gene3D" id="1.25.40.20">
    <property type="entry name" value="Ankyrin repeat-containing domain"/>
    <property type="match status" value="1"/>
</dbReference>
<dbReference type="InterPro" id="IPR002110">
    <property type="entry name" value="Ankyrin_rpt"/>
</dbReference>
<dbReference type="InterPro" id="IPR036770">
    <property type="entry name" value="Ankyrin_rpt-contain_sf"/>
</dbReference>
<dbReference type="InterPro" id="IPR018756">
    <property type="entry name" value="DUF2314"/>
</dbReference>
<dbReference type="Pfam" id="PF12796">
    <property type="entry name" value="Ank_2"/>
    <property type="match status" value="1"/>
</dbReference>
<dbReference type="Pfam" id="PF10077">
    <property type="entry name" value="DUF2314"/>
    <property type="match status" value="1"/>
</dbReference>
<dbReference type="SMART" id="SM00248">
    <property type="entry name" value="ANK"/>
    <property type="match status" value="1"/>
</dbReference>
<dbReference type="SUPFAM" id="SSF48403">
    <property type="entry name" value="Ankyrin repeat"/>
    <property type="match status" value="1"/>
</dbReference>
<dbReference type="PROSITE" id="PS50297">
    <property type="entry name" value="ANK_REP_REGION"/>
    <property type="match status" value="1"/>
</dbReference>
<dbReference type="PROSITE" id="PS50088">
    <property type="entry name" value="ANK_REPEAT"/>
    <property type="match status" value="1"/>
</dbReference>
<accession>Q9JRZ6</accession>
<reference key="1">
    <citation type="journal article" date="2000" name="Science">
        <title>Complete genome sequence of Neisseria meningitidis serogroup B strain MC58.</title>
        <authorList>
            <person name="Tettelin H."/>
            <person name="Saunders N.J."/>
            <person name="Heidelberg J.F."/>
            <person name="Jeffries A.C."/>
            <person name="Nelson K.E."/>
            <person name="Eisen J.A."/>
            <person name="Ketchum K.A."/>
            <person name="Hood D.W."/>
            <person name="Peden J.F."/>
            <person name="Dodson R.J."/>
            <person name="Nelson W.C."/>
            <person name="Gwinn M.L."/>
            <person name="DeBoy R.T."/>
            <person name="Peterson J.D."/>
            <person name="Hickey E.K."/>
            <person name="Haft D.H."/>
            <person name="Salzberg S.L."/>
            <person name="White O."/>
            <person name="Fleischmann R.D."/>
            <person name="Dougherty B.A."/>
            <person name="Mason T.M."/>
            <person name="Ciecko A."/>
            <person name="Parksey D.S."/>
            <person name="Blair E."/>
            <person name="Cittone H."/>
            <person name="Clark E.B."/>
            <person name="Cotton M.D."/>
            <person name="Utterback T.R."/>
            <person name="Khouri H.M."/>
            <person name="Qin H."/>
            <person name="Vamathevan J.J."/>
            <person name="Gill J."/>
            <person name="Scarlato V."/>
            <person name="Masignani V."/>
            <person name="Pizza M."/>
            <person name="Grandi G."/>
            <person name="Sun L."/>
            <person name="Smith H.O."/>
            <person name="Fraser C.M."/>
            <person name="Moxon E.R."/>
            <person name="Rappuoli R."/>
            <person name="Venter J.C."/>
        </authorList>
    </citation>
    <scope>NUCLEOTIDE SEQUENCE [LARGE SCALE GENOMIC DNA]</scope>
    <source>
        <strain>ATCC BAA-335 / MC58</strain>
    </source>
</reference>
<organism>
    <name type="scientific">Neisseria meningitidis serogroup B (strain ATCC BAA-335 / MC58)</name>
    <dbReference type="NCBI Taxonomy" id="122586"/>
    <lineage>
        <taxon>Bacteria</taxon>
        <taxon>Pseudomonadati</taxon>
        <taxon>Pseudomonadota</taxon>
        <taxon>Betaproteobacteria</taxon>
        <taxon>Neisseriales</taxon>
        <taxon>Neisseriaceae</taxon>
        <taxon>Neisseria</taxon>
    </lineage>
</organism>
<feature type="chain" id="PRO_0000067239" description="Putative ankyrin repeat protein NMB1133/NMB1171">
    <location>
        <begin position="1"/>
        <end position="253"/>
    </location>
</feature>
<feature type="repeat" description="ANK 1">
    <location>
        <begin position="196"/>
        <end position="225"/>
    </location>
</feature>
<feature type="repeat" description="ANK 2">
    <location>
        <begin position="229"/>
        <end position="252"/>
    </location>
</feature>